<gene>
    <name type="primary">Sfxn1</name>
</gene>
<sequence length="322" mass="35546">MSGEVPPNINIKEPRWDQSTFIGRASHFFTVTDPKNILLTNEQLENARKVVHDYRQGIVPAGLTENELWRAKYAYDSAFHPDTGEKMTLIGRMSAQVPMNMTITGCMMTFYRTTPAVLFWQWINQSFNAVVNYTNRSGDAPLTVNELGTAYVSATTGAVATALGLNALTKHVSPLIGRFVPFAAVAAANCINIPLMRQRELKVGIPVTDENGTRLGESTNAAKQAITQVVISRILMAAPGMAIPPFIMNTLEKKAFLKRFPWMSAPIQVTLVGFCLVFATPLCCALFPQKSSMSVTSLEDDLQASIQKSHPELRRVYFNKGL</sequence>
<accession>Q63965</accession>
<dbReference type="EMBL" id="S70011">
    <property type="protein sequence ID" value="AAB30258.1"/>
    <property type="status" value="ALT_INIT"/>
    <property type="molecule type" value="mRNA"/>
</dbReference>
<dbReference type="PIR" id="I55210">
    <property type="entry name" value="I55210"/>
</dbReference>
<dbReference type="FunCoup" id="Q63965">
    <property type="interactions" value="1325"/>
</dbReference>
<dbReference type="IntAct" id="Q63965">
    <property type="interactions" value="2"/>
</dbReference>
<dbReference type="MINT" id="Q63965"/>
<dbReference type="STRING" id="10116.ENSRNOP00000024707"/>
<dbReference type="CarbonylDB" id="Q63965"/>
<dbReference type="PhosphoSitePlus" id="Q63965"/>
<dbReference type="SwissPalm" id="Q63965"/>
<dbReference type="jPOST" id="Q63965"/>
<dbReference type="PaxDb" id="10116-ENSRNOP00000024707"/>
<dbReference type="AGR" id="RGD:1308482"/>
<dbReference type="RGD" id="1308482">
    <property type="gene designation" value="Sfxn1"/>
</dbReference>
<dbReference type="eggNOG" id="KOG3767">
    <property type="taxonomic scope" value="Eukaryota"/>
</dbReference>
<dbReference type="InParanoid" id="Q63965"/>
<dbReference type="PhylomeDB" id="Q63965"/>
<dbReference type="PRO" id="PR:Q63965"/>
<dbReference type="Proteomes" id="UP000002494">
    <property type="component" value="Unplaced"/>
</dbReference>
<dbReference type="GO" id="GO:0005743">
    <property type="term" value="C:mitochondrial inner membrane"/>
    <property type="evidence" value="ECO:0000250"/>
    <property type="project" value="UniProtKB"/>
</dbReference>
<dbReference type="GO" id="GO:0005739">
    <property type="term" value="C:mitochondrion"/>
    <property type="evidence" value="ECO:0000266"/>
    <property type="project" value="RGD"/>
</dbReference>
<dbReference type="GO" id="GO:0015180">
    <property type="term" value="F:L-alanine transmembrane transporter activity"/>
    <property type="evidence" value="ECO:0000250"/>
    <property type="project" value="UniProtKB"/>
</dbReference>
<dbReference type="GO" id="GO:0015194">
    <property type="term" value="F:L-serine transmembrane transporter activity"/>
    <property type="evidence" value="ECO:0000250"/>
    <property type="project" value="UniProtKB"/>
</dbReference>
<dbReference type="GO" id="GO:0015075">
    <property type="term" value="F:monoatomic ion transmembrane transporter activity"/>
    <property type="evidence" value="ECO:0007669"/>
    <property type="project" value="InterPro"/>
</dbReference>
<dbReference type="GO" id="GO:0022857">
    <property type="term" value="F:transmembrane transporter activity"/>
    <property type="evidence" value="ECO:0000318"/>
    <property type="project" value="GO_Central"/>
</dbReference>
<dbReference type="GO" id="GO:0030218">
    <property type="term" value="P:erythrocyte differentiation"/>
    <property type="evidence" value="ECO:0000266"/>
    <property type="project" value="RGD"/>
</dbReference>
<dbReference type="GO" id="GO:0006826">
    <property type="term" value="P:iron ion transport"/>
    <property type="evidence" value="ECO:0000266"/>
    <property type="project" value="RGD"/>
</dbReference>
<dbReference type="GO" id="GO:0015808">
    <property type="term" value="P:L-alanine transport"/>
    <property type="evidence" value="ECO:0000250"/>
    <property type="project" value="UniProtKB"/>
</dbReference>
<dbReference type="GO" id="GO:0015825">
    <property type="term" value="P:L-serine transport"/>
    <property type="evidence" value="ECO:0000250"/>
    <property type="project" value="UniProtKB"/>
</dbReference>
<dbReference type="GO" id="GO:0006730">
    <property type="term" value="P:one-carbon metabolic process"/>
    <property type="evidence" value="ECO:0000250"/>
    <property type="project" value="UniProtKB"/>
</dbReference>
<dbReference type="GO" id="GO:0140300">
    <property type="term" value="P:serine import into mitochondrion"/>
    <property type="evidence" value="ECO:0000250"/>
    <property type="project" value="UniProtKB"/>
</dbReference>
<dbReference type="InterPro" id="IPR004686">
    <property type="entry name" value="Mtc"/>
</dbReference>
<dbReference type="NCBIfam" id="TIGR00798">
    <property type="entry name" value="mtc"/>
    <property type="match status" value="1"/>
</dbReference>
<dbReference type="PANTHER" id="PTHR11153">
    <property type="entry name" value="SIDEROFLEXIN"/>
    <property type="match status" value="1"/>
</dbReference>
<dbReference type="PANTHER" id="PTHR11153:SF8">
    <property type="entry name" value="SIDEROFLEXIN-1"/>
    <property type="match status" value="1"/>
</dbReference>
<dbReference type="Pfam" id="PF03820">
    <property type="entry name" value="SFXNs"/>
    <property type="match status" value="1"/>
</dbReference>
<name>SFXN1_RAT</name>
<comment type="function">
    <text evidence="1">Amino acid transporter importing serine, an essential substrate of the mitochondrial branch of the one-carbon pathway, into mitochondria. Mitochondrial serine is then converted to glycine and formate, which exits to the cytosol where it is used to generate the charged folates that serve as one-carbon donors. May also transport other amino acids including alanine and cysteine.</text>
</comment>
<comment type="catalytic activity">
    <reaction evidence="1">
        <text>L-serine(in) = L-serine(out)</text>
        <dbReference type="Rhea" id="RHEA:35031"/>
        <dbReference type="ChEBI" id="CHEBI:33384"/>
    </reaction>
</comment>
<comment type="catalytic activity">
    <reaction evidence="1">
        <text>L-alanine(in) = L-alanine(out)</text>
        <dbReference type="Rhea" id="RHEA:70719"/>
        <dbReference type="ChEBI" id="CHEBI:57972"/>
    </reaction>
</comment>
<comment type="catalytic activity">
    <reaction evidence="1">
        <text>L-cysteine(in) = L-cysteine(out)</text>
        <dbReference type="Rhea" id="RHEA:29655"/>
        <dbReference type="ChEBI" id="CHEBI:35235"/>
    </reaction>
</comment>
<comment type="subcellular location">
    <subcellularLocation>
        <location evidence="1">Mitochondrion inner membrane</location>
        <topology evidence="2">Multi-pass membrane protein</topology>
    </subcellularLocation>
</comment>
<comment type="similarity">
    <text evidence="6">Belongs to the sideroflexin family.</text>
</comment>
<comment type="caution">
    <text evidence="3 4">Originally identified from a mitochondrial tricarboxylate carrier purification (PubMed:8132491). The physiological relevance of this remains unclear (PubMed:30442778).</text>
</comment>
<comment type="sequence caution" evidence="6">
    <conflict type="erroneous initiation">
        <sequence resource="EMBL-CDS" id="AAB30258"/>
    </conflict>
</comment>
<protein>
    <recommendedName>
        <fullName>Sideroflexin-1</fullName>
    </recommendedName>
    <alternativeName>
        <fullName evidence="5">Tricarboxylate carrier protein</fullName>
        <shortName evidence="5">TCC</shortName>
    </alternativeName>
</protein>
<feature type="initiator methionine" description="Removed" evidence="1">
    <location>
        <position position="1"/>
    </location>
</feature>
<feature type="chain" id="PRO_0000177034" description="Sideroflexin-1">
    <location>
        <begin position="2"/>
        <end position="322"/>
    </location>
</feature>
<feature type="topological domain" description="Mitochondrial matrix" evidence="1">
    <location>
        <begin position="2"/>
        <end position="102"/>
    </location>
</feature>
<feature type="transmembrane region" description="Helical" evidence="2">
    <location>
        <begin position="103"/>
        <end position="120"/>
    </location>
</feature>
<feature type="topological domain" description="Mitochondrial intermembrane" evidence="6">
    <location>
        <begin position="121"/>
        <end position="146"/>
    </location>
</feature>
<feature type="transmembrane region" description="Helical" evidence="2">
    <location>
        <begin position="147"/>
        <end position="167"/>
    </location>
</feature>
<feature type="topological domain" description="Mitochondrial matrix" evidence="6">
    <location>
        <begin position="168"/>
        <end position="174"/>
    </location>
</feature>
<feature type="transmembrane region" description="Helical" evidence="2">
    <location>
        <begin position="175"/>
        <end position="195"/>
    </location>
</feature>
<feature type="topological domain" description="Mitochondrial intermembrane" evidence="6">
    <location>
        <begin position="196"/>
        <end position="228"/>
    </location>
</feature>
<feature type="transmembrane region" description="Helical" evidence="2">
    <location>
        <begin position="229"/>
        <end position="249"/>
    </location>
</feature>
<feature type="topological domain" description="Mitochondrial matrix" evidence="6">
    <location>
        <begin position="250"/>
        <end position="266"/>
    </location>
</feature>
<feature type="transmembrane region" description="Helical" evidence="2">
    <location>
        <begin position="267"/>
        <end position="287"/>
    </location>
</feature>
<feature type="topological domain" description="Mitochondrial intermembrane" evidence="1">
    <location>
        <begin position="288"/>
        <end position="322"/>
    </location>
</feature>
<feature type="modified residue" description="N-acetylserine" evidence="1">
    <location>
        <position position="2"/>
    </location>
</feature>
<keyword id="KW-0007">Acetylation</keyword>
<keyword id="KW-0029">Amino-acid transport</keyword>
<keyword id="KW-0472">Membrane</keyword>
<keyword id="KW-0496">Mitochondrion</keyword>
<keyword id="KW-0999">Mitochondrion inner membrane</keyword>
<keyword id="KW-0554">One-carbon metabolism</keyword>
<keyword id="KW-1185">Reference proteome</keyword>
<keyword id="KW-0812">Transmembrane</keyword>
<keyword id="KW-1133">Transmembrane helix</keyword>
<keyword id="KW-0813">Transport</keyword>
<organism>
    <name type="scientific">Rattus norvegicus</name>
    <name type="common">Rat</name>
    <dbReference type="NCBI Taxonomy" id="10116"/>
    <lineage>
        <taxon>Eukaryota</taxon>
        <taxon>Metazoa</taxon>
        <taxon>Chordata</taxon>
        <taxon>Craniata</taxon>
        <taxon>Vertebrata</taxon>
        <taxon>Euteleostomi</taxon>
        <taxon>Mammalia</taxon>
        <taxon>Eutheria</taxon>
        <taxon>Euarchontoglires</taxon>
        <taxon>Glires</taxon>
        <taxon>Rodentia</taxon>
        <taxon>Myomorpha</taxon>
        <taxon>Muroidea</taxon>
        <taxon>Muridae</taxon>
        <taxon>Murinae</taxon>
        <taxon>Rattus</taxon>
    </lineage>
</organism>
<reference key="1">
    <citation type="journal article" date="1993" name="J. Bioenerg. Biomembr.">
        <title>The mitochondrial tricarboxylate carrier.</title>
        <authorList>
            <person name="Azzi A."/>
            <person name="Glerum M."/>
            <person name="Koller R."/>
            <person name="Mertens W."/>
            <person name="Spycher S."/>
        </authorList>
    </citation>
    <scope>NUCLEOTIDE SEQUENCE [MRNA]</scope>
    <scope>CAUTION</scope>
    <source>
        <tissue>Liver</tissue>
    </source>
</reference>
<reference key="2">
    <citation type="journal article" date="2018" name="Science">
        <title>SFXN1 is a mitochondrial serine transporter required for one-carbon metabolism.</title>
        <authorList>
            <person name="Kory N."/>
            <person name="Wyant G.A."/>
            <person name="Prakash G."/>
            <person name="Uit de Bos J."/>
            <person name="Bottanelli F."/>
            <person name="Pacold M.E."/>
            <person name="Chan S.H."/>
            <person name="Lewis C.A."/>
            <person name="Wang T."/>
            <person name="Keys H.R."/>
            <person name="Guo Y.E."/>
            <person name="Sabatini D.M."/>
        </authorList>
    </citation>
    <scope>CAUTION</scope>
</reference>
<proteinExistence type="evidence at transcript level"/>
<evidence type="ECO:0000250" key="1">
    <source>
        <dbReference type="UniProtKB" id="Q9H9B4"/>
    </source>
</evidence>
<evidence type="ECO:0000255" key="2"/>
<evidence type="ECO:0000269" key="3">
    <source>
    </source>
</evidence>
<evidence type="ECO:0000303" key="4">
    <source>
    </source>
</evidence>
<evidence type="ECO:0000303" key="5">
    <source>
    </source>
</evidence>
<evidence type="ECO:0000305" key="6"/>